<keyword id="KW-0131">Cell cycle</keyword>
<keyword id="KW-0132">Cell division</keyword>
<keyword id="KW-0143">Chaperone</keyword>
<keyword id="KW-0963">Cytoplasm</keyword>
<keyword id="KW-0413">Isomerase</keyword>
<keyword id="KW-1185">Reference proteome</keyword>
<keyword id="KW-0697">Rotamase</keyword>
<feature type="chain" id="PRO_1000198156" description="Trigger factor">
    <location>
        <begin position="1"/>
        <end position="432"/>
    </location>
</feature>
<feature type="domain" description="PPIase FKBP-type" evidence="1">
    <location>
        <begin position="161"/>
        <end position="246"/>
    </location>
</feature>
<organism>
    <name type="scientific">Escherichia coli (strain 55989 / EAEC)</name>
    <dbReference type="NCBI Taxonomy" id="585055"/>
    <lineage>
        <taxon>Bacteria</taxon>
        <taxon>Pseudomonadati</taxon>
        <taxon>Pseudomonadota</taxon>
        <taxon>Gammaproteobacteria</taxon>
        <taxon>Enterobacterales</taxon>
        <taxon>Enterobacteriaceae</taxon>
        <taxon>Escherichia</taxon>
    </lineage>
</organism>
<accession>B7L673</accession>
<dbReference type="EC" id="5.2.1.8" evidence="1"/>
<dbReference type="EMBL" id="CU928145">
    <property type="protein sequence ID" value="CAU96323.1"/>
    <property type="molecule type" value="Genomic_DNA"/>
</dbReference>
<dbReference type="RefSeq" id="WP_001198386.1">
    <property type="nucleotide sequence ID" value="NC_011748.1"/>
</dbReference>
<dbReference type="SMR" id="B7L673"/>
<dbReference type="GeneID" id="75202861"/>
<dbReference type="KEGG" id="eck:EC55989_0450"/>
<dbReference type="HOGENOM" id="CLU_033058_2_0_6"/>
<dbReference type="Proteomes" id="UP000000746">
    <property type="component" value="Chromosome"/>
</dbReference>
<dbReference type="GO" id="GO:0005737">
    <property type="term" value="C:cytoplasm"/>
    <property type="evidence" value="ECO:0007669"/>
    <property type="project" value="UniProtKB-SubCell"/>
</dbReference>
<dbReference type="GO" id="GO:0003755">
    <property type="term" value="F:peptidyl-prolyl cis-trans isomerase activity"/>
    <property type="evidence" value="ECO:0007669"/>
    <property type="project" value="UniProtKB-UniRule"/>
</dbReference>
<dbReference type="GO" id="GO:0044183">
    <property type="term" value="F:protein folding chaperone"/>
    <property type="evidence" value="ECO:0007669"/>
    <property type="project" value="TreeGrafter"/>
</dbReference>
<dbReference type="GO" id="GO:0043022">
    <property type="term" value="F:ribosome binding"/>
    <property type="evidence" value="ECO:0007669"/>
    <property type="project" value="TreeGrafter"/>
</dbReference>
<dbReference type="GO" id="GO:0051083">
    <property type="term" value="P:'de novo' cotranslational protein folding"/>
    <property type="evidence" value="ECO:0007669"/>
    <property type="project" value="TreeGrafter"/>
</dbReference>
<dbReference type="GO" id="GO:0051301">
    <property type="term" value="P:cell division"/>
    <property type="evidence" value="ECO:0007669"/>
    <property type="project" value="UniProtKB-KW"/>
</dbReference>
<dbReference type="GO" id="GO:0061077">
    <property type="term" value="P:chaperone-mediated protein folding"/>
    <property type="evidence" value="ECO:0007669"/>
    <property type="project" value="TreeGrafter"/>
</dbReference>
<dbReference type="GO" id="GO:0015031">
    <property type="term" value="P:protein transport"/>
    <property type="evidence" value="ECO:0007669"/>
    <property type="project" value="UniProtKB-UniRule"/>
</dbReference>
<dbReference type="GO" id="GO:0043335">
    <property type="term" value="P:protein unfolding"/>
    <property type="evidence" value="ECO:0007669"/>
    <property type="project" value="TreeGrafter"/>
</dbReference>
<dbReference type="FunFam" id="1.10.3120.10:FF:000001">
    <property type="entry name" value="Trigger factor"/>
    <property type="match status" value="1"/>
</dbReference>
<dbReference type="FunFam" id="3.10.50.40:FF:000001">
    <property type="entry name" value="Trigger factor"/>
    <property type="match status" value="1"/>
</dbReference>
<dbReference type="FunFam" id="3.30.70.1050:FF:000001">
    <property type="entry name" value="Trigger factor"/>
    <property type="match status" value="1"/>
</dbReference>
<dbReference type="Gene3D" id="3.10.50.40">
    <property type="match status" value="1"/>
</dbReference>
<dbReference type="Gene3D" id="3.30.70.1050">
    <property type="entry name" value="Trigger factor ribosome-binding domain"/>
    <property type="match status" value="1"/>
</dbReference>
<dbReference type="Gene3D" id="1.10.3120.10">
    <property type="entry name" value="Trigger factor, C-terminal domain"/>
    <property type="match status" value="1"/>
</dbReference>
<dbReference type="HAMAP" id="MF_00303">
    <property type="entry name" value="Trigger_factor_Tig"/>
    <property type="match status" value="1"/>
</dbReference>
<dbReference type="InterPro" id="IPR046357">
    <property type="entry name" value="PPIase_dom_sf"/>
</dbReference>
<dbReference type="InterPro" id="IPR001179">
    <property type="entry name" value="PPIase_FKBP_dom"/>
</dbReference>
<dbReference type="InterPro" id="IPR005215">
    <property type="entry name" value="Trig_fac"/>
</dbReference>
<dbReference type="InterPro" id="IPR008880">
    <property type="entry name" value="Trigger_fac_C"/>
</dbReference>
<dbReference type="InterPro" id="IPR037041">
    <property type="entry name" value="Trigger_fac_C_sf"/>
</dbReference>
<dbReference type="InterPro" id="IPR008881">
    <property type="entry name" value="Trigger_fac_ribosome-bd_bac"/>
</dbReference>
<dbReference type="InterPro" id="IPR036611">
    <property type="entry name" value="Trigger_fac_ribosome-bd_sf"/>
</dbReference>
<dbReference type="InterPro" id="IPR027304">
    <property type="entry name" value="Trigger_fact/SurA_dom_sf"/>
</dbReference>
<dbReference type="NCBIfam" id="TIGR00115">
    <property type="entry name" value="tig"/>
    <property type="match status" value="1"/>
</dbReference>
<dbReference type="PANTHER" id="PTHR30560">
    <property type="entry name" value="TRIGGER FACTOR CHAPERONE AND PEPTIDYL-PROLYL CIS/TRANS ISOMERASE"/>
    <property type="match status" value="1"/>
</dbReference>
<dbReference type="PANTHER" id="PTHR30560:SF3">
    <property type="entry name" value="TRIGGER FACTOR-LIKE PROTEIN TIG, CHLOROPLASTIC"/>
    <property type="match status" value="1"/>
</dbReference>
<dbReference type="Pfam" id="PF00254">
    <property type="entry name" value="FKBP_C"/>
    <property type="match status" value="1"/>
</dbReference>
<dbReference type="Pfam" id="PF05698">
    <property type="entry name" value="Trigger_C"/>
    <property type="match status" value="1"/>
</dbReference>
<dbReference type="Pfam" id="PF05697">
    <property type="entry name" value="Trigger_N"/>
    <property type="match status" value="1"/>
</dbReference>
<dbReference type="PIRSF" id="PIRSF003095">
    <property type="entry name" value="Trigger_factor"/>
    <property type="match status" value="1"/>
</dbReference>
<dbReference type="SUPFAM" id="SSF54534">
    <property type="entry name" value="FKBP-like"/>
    <property type="match status" value="1"/>
</dbReference>
<dbReference type="SUPFAM" id="SSF109998">
    <property type="entry name" value="Triger factor/SurA peptide-binding domain-like"/>
    <property type="match status" value="1"/>
</dbReference>
<dbReference type="SUPFAM" id="SSF102735">
    <property type="entry name" value="Trigger factor ribosome-binding domain"/>
    <property type="match status" value="1"/>
</dbReference>
<dbReference type="PROSITE" id="PS50059">
    <property type="entry name" value="FKBP_PPIASE"/>
    <property type="match status" value="1"/>
</dbReference>
<sequence length="432" mass="48193">MQVSVETTQGLGRRVTITIAADSIETAVKSELVNVAKKVRIDGFRKGKVPMNIVAQRYGASVRQDVLGDLMSRNFIDAIIKEKINPAGAPTYVPGEYKLGEDFTYSVEFEVYPEVELQGLEAIEVEKPIVEVTDADVDGMLDTLRKQQATWKEKDGAVEAEDRVTIDFTGSVDGEEFEGGKASDFVLAMGQGRMIPGFEDGIKGHKAGEEFTIDVTFPEEYHAENLKGKAAKFAINLKKVEERELPELTAEFIKRFGVEDGSVEGLRAEVRKNMERELKSAIRNRVKSQAIEGLVKANDIDVPAALIDSEIDVLRRQAAQRFGGNEKQALELPRELFEEQAKRRVVVGLLLGEVIRTNELKADEERVKGLIEEMASAYEDPKEVIEFYSKNKELMDNMRNVALEEQAVEAVLAKAKVTEKETTFNELMNQQA</sequence>
<comment type="function">
    <text evidence="1">Involved in protein export. Acts as a chaperone by maintaining the newly synthesized protein in an open conformation. Functions as a peptidyl-prolyl cis-trans isomerase.</text>
</comment>
<comment type="catalytic activity">
    <reaction evidence="1">
        <text>[protein]-peptidylproline (omega=180) = [protein]-peptidylproline (omega=0)</text>
        <dbReference type="Rhea" id="RHEA:16237"/>
        <dbReference type="Rhea" id="RHEA-COMP:10747"/>
        <dbReference type="Rhea" id="RHEA-COMP:10748"/>
        <dbReference type="ChEBI" id="CHEBI:83833"/>
        <dbReference type="ChEBI" id="CHEBI:83834"/>
        <dbReference type="EC" id="5.2.1.8"/>
    </reaction>
</comment>
<comment type="subunit">
    <text evidence="1">Homodimer and monomer. In vivo most of the ribosomes are in complex with monomeric TF. Uncomplexed TF, however, is in a monomer-dimer equilibrium with approximately two thirds of TF existing in a dimeric state.</text>
</comment>
<comment type="subcellular location">
    <subcellularLocation>
        <location>Cytoplasm</location>
    </subcellularLocation>
    <text evidence="1">About half TF is bound to the ribosome near the polypeptide exit tunnel while the other half is free in the cytoplasm.</text>
</comment>
<comment type="domain">
    <text evidence="1">Consists of 3 domains; the N-terminus binds the ribosome, the middle domain has PPIase activity, while the C-terminus has intrinsic chaperone activity on its own.</text>
</comment>
<comment type="similarity">
    <text evidence="1">Belongs to the FKBP-type PPIase family. Tig subfamily.</text>
</comment>
<proteinExistence type="inferred from homology"/>
<name>TIG_ECO55</name>
<gene>
    <name evidence="1" type="primary">tig</name>
    <name type="ordered locus">EC55989_0450</name>
</gene>
<reference key="1">
    <citation type="journal article" date="2009" name="PLoS Genet.">
        <title>Organised genome dynamics in the Escherichia coli species results in highly diverse adaptive paths.</title>
        <authorList>
            <person name="Touchon M."/>
            <person name="Hoede C."/>
            <person name="Tenaillon O."/>
            <person name="Barbe V."/>
            <person name="Baeriswyl S."/>
            <person name="Bidet P."/>
            <person name="Bingen E."/>
            <person name="Bonacorsi S."/>
            <person name="Bouchier C."/>
            <person name="Bouvet O."/>
            <person name="Calteau A."/>
            <person name="Chiapello H."/>
            <person name="Clermont O."/>
            <person name="Cruveiller S."/>
            <person name="Danchin A."/>
            <person name="Diard M."/>
            <person name="Dossat C."/>
            <person name="Karoui M.E."/>
            <person name="Frapy E."/>
            <person name="Garry L."/>
            <person name="Ghigo J.M."/>
            <person name="Gilles A.M."/>
            <person name="Johnson J."/>
            <person name="Le Bouguenec C."/>
            <person name="Lescat M."/>
            <person name="Mangenot S."/>
            <person name="Martinez-Jehanne V."/>
            <person name="Matic I."/>
            <person name="Nassif X."/>
            <person name="Oztas S."/>
            <person name="Petit M.A."/>
            <person name="Pichon C."/>
            <person name="Rouy Z."/>
            <person name="Ruf C.S."/>
            <person name="Schneider D."/>
            <person name="Tourret J."/>
            <person name="Vacherie B."/>
            <person name="Vallenet D."/>
            <person name="Medigue C."/>
            <person name="Rocha E.P.C."/>
            <person name="Denamur E."/>
        </authorList>
    </citation>
    <scope>NUCLEOTIDE SEQUENCE [LARGE SCALE GENOMIC DNA]</scope>
    <source>
        <strain>55989 / EAEC</strain>
    </source>
</reference>
<protein>
    <recommendedName>
        <fullName evidence="1">Trigger factor</fullName>
        <shortName evidence="1">TF</shortName>
        <ecNumber evidence="1">5.2.1.8</ecNumber>
    </recommendedName>
    <alternativeName>
        <fullName evidence="1">PPIase</fullName>
    </alternativeName>
</protein>
<evidence type="ECO:0000255" key="1">
    <source>
        <dbReference type="HAMAP-Rule" id="MF_00303"/>
    </source>
</evidence>